<protein>
    <recommendedName>
        <fullName evidence="1">Fructose-1,6-bisphosphatase class 1</fullName>
        <shortName evidence="1">FBPase class 1</shortName>
        <ecNumber evidence="1">3.1.3.11</ecNumber>
    </recommendedName>
    <alternativeName>
        <fullName evidence="1">D-fructose-1,6-bisphosphate 1-phosphohydrolase class 1</fullName>
    </alternativeName>
</protein>
<sequence length="343" mass="38228">MSQRTLTQFLIEQQRKEAALPAQLRLLVEIVARACKTISHCVNKGALGGMLGNLTSENVQGEVQKKLDVIANEKLLEANEWGGHLAAMASEEMETIHLIPNRYPKGEYLLLFDPIDGSSNIDVDLSVGTIFSVLTAPEDVSGRAVTEADFLQPGRKQVAAGYAIYGPQTLLILSVGTGVYEFALDREMGSWVLTNERIRIPSGNREFAINMSNMRHWAPPVRRYIDECLAGTTGPREANFNMRWTASMVADIHRILKRGGIFMYPWDAREPDRAGKLRLMYEANPMGFLIEQAGGMAFDGNHRILDIEPKALHQRVGVVMGDRDEVKRVVQYHHDANLAKQTA</sequence>
<reference key="1">
    <citation type="journal article" date="2011" name="Stand. Genomic Sci.">
        <title>Complete genome sequence of Parvibaculum lavamentivorans type strain (DS-1(T)).</title>
        <authorList>
            <person name="Schleheck D."/>
            <person name="Weiss M."/>
            <person name="Pitluck S."/>
            <person name="Bruce D."/>
            <person name="Land M.L."/>
            <person name="Han S."/>
            <person name="Saunders E."/>
            <person name="Tapia R."/>
            <person name="Detter C."/>
            <person name="Brettin T."/>
            <person name="Han J."/>
            <person name="Woyke T."/>
            <person name="Goodwin L."/>
            <person name="Pennacchio L."/>
            <person name="Nolan M."/>
            <person name="Cook A.M."/>
            <person name="Kjelleberg S."/>
            <person name="Thomas T."/>
        </authorList>
    </citation>
    <scope>NUCLEOTIDE SEQUENCE [LARGE SCALE GENOMIC DNA]</scope>
    <source>
        <strain>DS-1 / DSM 13023 / NCIMB 13966</strain>
    </source>
</reference>
<comment type="catalytic activity">
    <reaction evidence="1">
        <text>beta-D-fructose 1,6-bisphosphate + H2O = beta-D-fructose 6-phosphate + phosphate</text>
        <dbReference type="Rhea" id="RHEA:11064"/>
        <dbReference type="ChEBI" id="CHEBI:15377"/>
        <dbReference type="ChEBI" id="CHEBI:32966"/>
        <dbReference type="ChEBI" id="CHEBI:43474"/>
        <dbReference type="ChEBI" id="CHEBI:57634"/>
        <dbReference type="EC" id="3.1.3.11"/>
    </reaction>
</comment>
<comment type="cofactor">
    <cofactor evidence="1">
        <name>Mg(2+)</name>
        <dbReference type="ChEBI" id="CHEBI:18420"/>
    </cofactor>
    <text evidence="1">Binds 2 magnesium ions per subunit.</text>
</comment>
<comment type="pathway">
    <text evidence="1">Carbohydrate biosynthesis; gluconeogenesis.</text>
</comment>
<comment type="subunit">
    <text evidence="1">Homotetramer.</text>
</comment>
<comment type="subcellular location">
    <subcellularLocation>
        <location evidence="1">Cytoplasm</location>
    </subcellularLocation>
</comment>
<comment type="similarity">
    <text evidence="1">Belongs to the FBPase class 1 family.</text>
</comment>
<organism>
    <name type="scientific">Parvibaculum lavamentivorans (strain DS-1 / DSM 13023 / NCIMB 13966)</name>
    <dbReference type="NCBI Taxonomy" id="402881"/>
    <lineage>
        <taxon>Bacteria</taxon>
        <taxon>Pseudomonadati</taxon>
        <taxon>Pseudomonadota</taxon>
        <taxon>Alphaproteobacteria</taxon>
        <taxon>Hyphomicrobiales</taxon>
        <taxon>Parvibaculaceae</taxon>
        <taxon>Parvibaculum</taxon>
    </lineage>
</organism>
<proteinExistence type="inferred from homology"/>
<feature type="chain" id="PRO_0000364620" description="Fructose-1,6-bisphosphatase class 1">
    <location>
        <begin position="1"/>
        <end position="343"/>
    </location>
</feature>
<feature type="binding site" evidence="1">
    <location>
        <position position="91"/>
    </location>
    <ligand>
        <name>Mg(2+)</name>
        <dbReference type="ChEBI" id="CHEBI:18420"/>
        <label>1</label>
    </ligand>
</feature>
<feature type="binding site" evidence="1">
    <location>
        <position position="113"/>
    </location>
    <ligand>
        <name>Mg(2+)</name>
        <dbReference type="ChEBI" id="CHEBI:18420"/>
        <label>1</label>
    </ligand>
</feature>
<feature type="binding site" evidence="1">
    <location>
        <position position="113"/>
    </location>
    <ligand>
        <name>Mg(2+)</name>
        <dbReference type="ChEBI" id="CHEBI:18420"/>
        <label>2</label>
    </ligand>
</feature>
<feature type="binding site" evidence="1">
    <location>
        <position position="115"/>
    </location>
    <ligand>
        <name>Mg(2+)</name>
        <dbReference type="ChEBI" id="CHEBI:18420"/>
        <label>1</label>
    </ligand>
</feature>
<feature type="binding site" evidence="1">
    <location>
        <begin position="116"/>
        <end position="119"/>
    </location>
    <ligand>
        <name>substrate</name>
    </ligand>
</feature>
<feature type="binding site" evidence="1">
    <location>
        <position position="116"/>
    </location>
    <ligand>
        <name>Mg(2+)</name>
        <dbReference type="ChEBI" id="CHEBI:18420"/>
        <label>2</label>
    </ligand>
</feature>
<feature type="binding site" evidence="1">
    <location>
        <position position="210"/>
    </location>
    <ligand>
        <name>substrate</name>
    </ligand>
</feature>
<feature type="binding site" evidence="1">
    <location>
        <position position="276"/>
    </location>
    <ligand>
        <name>substrate</name>
    </ligand>
</feature>
<feature type="binding site" evidence="1">
    <location>
        <position position="282"/>
    </location>
    <ligand>
        <name>Mg(2+)</name>
        <dbReference type="ChEBI" id="CHEBI:18420"/>
        <label>2</label>
    </ligand>
</feature>
<accession>A7HYA5</accession>
<keyword id="KW-0119">Carbohydrate metabolism</keyword>
<keyword id="KW-0963">Cytoplasm</keyword>
<keyword id="KW-0378">Hydrolase</keyword>
<keyword id="KW-0460">Magnesium</keyword>
<keyword id="KW-0479">Metal-binding</keyword>
<keyword id="KW-1185">Reference proteome</keyword>
<evidence type="ECO:0000255" key="1">
    <source>
        <dbReference type="HAMAP-Rule" id="MF_01855"/>
    </source>
</evidence>
<name>F16PA_PARL1</name>
<gene>
    <name evidence="1" type="primary">fbp</name>
    <name type="ordered locus">Plav_3283</name>
</gene>
<dbReference type="EC" id="3.1.3.11" evidence="1"/>
<dbReference type="EMBL" id="CP000774">
    <property type="protein sequence ID" value="ABS64888.1"/>
    <property type="molecule type" value="Genomic_DNA"/>
</dbReference>
<dbReference type="RefSeq" id="WP_012112216.1">
    <property type="nucleotide sequence ID" value="NC_009719.1"/>
</dbReference>
<dbReference type="SMR" id="A7HYA5"/>
<dbReference type="STRING" id="402881.Plav_3283"/>
<dbReference type="KEGG" id="pla:Plav_3283"/>
<dbReference type="eggNOG" id="COG0158">
    <property type="taxonomic scope" value="Bacteria"/>
</dbReference>
<dbReference type="HOGENOM" id="CLU_039977_0_0_5"/>
<dbReference type="OrthoDB" id="9806756at2"/>
<dbReference type="UniPathway" id="UPA00138"/>
<dbReference type="Proteomes" id="UP000006377">
    <property type="component" value="Chromosome"/>
</dbReference>
<dbReference type="GO" id="GO:0005829">
    <property type="term" value="C:cytosol"/>
    <property type="evidence" value="ECO:0007669"/>
    <property type="project" value="TreeGrafter"/>
</dbReference>
<dbReference type="GO" id="GO:0042132">
    <property type="term" value="F:fructose 1,6-bisphosphate 1-phosphatase activity"/>
    <property type="evidence" value="ECO:0007669"/>
    <property type="project" value="UniProtKB-UniRule"/>
</dbReference>
<dbReference type="GO" id="GO:0000287">
    <property type="term" value="F:magnesium ion binding"/>
    <property type="evidence" value="ECO:0007669"/>
    <property type="project" value="UniProtKB-UniRule"/>
</dbReference>
<dbReference type="GO" id="GO:0030388">
    <property type="term" value="P:fructose 1,6-bisphosphate metabolic process"/>
    <property type="evidence" value="ECO:0007669"/>
    <property type="project" value="TreeGrafter"/>
</dbReference>
<dbReference type="GO" id="GO:0006002">
    <property type="term" value="P:fructose 6-phosphate metabolic process"/>
    <property type="evidence" value="ECO:0007669"/>
    <property type="project" value="TreeGrafter"/>
</dbReference>
<dbReference type="GO" id="GO:0006000">
    <property type="term" value="P:fructose metabolic process"/>
    <property type="evidence" value="ECO:0007669"/>
    <property type="project" value="TreeGrafter"/>
</dbReference>
<dbReference type="GO" id="GO:0006094">
    <property type="term" value="P:gluconeogenesis"/>
    <property type="evidence" value="ECO:0007669"/>
    <property type="project" value="UniProtKB-UniRule"/>
</dbReference>
<dbReference type="GO" id="GO:0005986">
    <property type="term" value="P:sucrose biosynthetic process"/>
    <property type="evidence" value="ECO:0007669"/>
    <property type="project" value="TreeGrafter"/>
</dbReference>
<dbReference type="CDD" id="cd00354">
    <property type="entry name" value="FBPase"/>
    <property type="match status" value="1"/>
</dbReference>
<dbReference type="FunFam" id="3.30.540.10:FF:000006">
    <property type="entry name" value="Fructose-1,6-bisphosphatase class 1"/>
    <property type="match status" value="1"/>
</dbReference>
<dbReference type="FunFam" id="3.40.190.80:FF:000011">
    <property type="entry name" value="Fructose-1,6-bisphosphatase class 1"/>
    <property type="match status" value="1"/>
</dbReference>
<dbReference type="Gene3D" id="3.40.190.80">
    <property type="match status" value="1"/>
</dbReference>
<dbReference type="Gene3D" id="3.30.540.10">
    <property type="entry name" value="Fructose-1,6-Bisphosphatase, subunit A, domain 1"/>
    <property type="match status" value="1"/>
</dbReference>
<dbReference type="HAMAP" id="MF_01855">
    <property type="entry name" value="FBPase_class1"/>
    <property type="match status" value="1"/>
</dbReference>
<dbReference type="InterPro" id="IPR044015">
    <property type="entry name" value="FBPase_C_dom"/>
</dbReference>
<dbReference type="InterPro" id="IPR000146">
    <property type="entry name" value="FBPase_class-1"/>
</dbReference>
<dbReference type="InterPro" id="IPR033391">
    <property type="entry name" value="FBPase_N"/>
</dbReference>
<dbReference type="InterPro" id="IPR028343">
    <property type="entry name" value="FBPtase"/>
</dbReference>
<dbReference type="NCBIfam" id="NF006779">
    <property type="entry name" value="PRK09293.1-3"/>
    <property type="match status" value="1"/>
</dbReference>
<dbReference type="NCBIfam" id="NF006780">
    <property type="entry name" value="PRK09293.1-4"/>
    <property type="match status" value="1"/>
</dbReference>
<dbReference type="PANTHER" id="PTHR11556">
    <property type="entry name" value="FRUCTOSE-1,6-BISPHOSPHATASE-RELATED"/>
    <property type="match status" value="1"/>
</dbReference>
<dbReference type="PANTHER" id="PTHR11556:SF35">
    <property type="entry name" value="SEDOHEPTULOSE-1,7-BISPHOSPHATASE, CHLOROPLASTIC"/>
    <property type="match status" value="1"/>
</dbReference>
<dbReference type="Pfam" id="PF00316">
    <property type="entry name" value="FBPase"/>
    <property type="match status" value="1"/>
</dbReference>
<dbReference type="Pfam" id="PF18913">
    <property type="entry name" value="FBPase_C"/>
    <property type="match status" value="1"/>
</dbReference>
<dbReference type="PIRSF" id="PIRSF500210">
    <property type="entry name" value="FBPtase"/>
    <property type="match status" value="1"/>
</dbReference>
<dbReference type="PIRSF" id="PIRSF000904">
    <property type="entry name" value="FBPtase_SBPase"/>
    <property type="match status" value="1"/>
</dbReference>
<dbReference type="PRINTS" id="PR00115">
    <property type="entry name" value="F16BPHPHTASE"/>
</dbReference>
<dbReference type="SUPFAM" id="SSF56655">
    <property type="entry name" value="Carbohydrate phosphatase"/>
    <property type="match status" value="1"/>
</dbReference>